<feature type="chain" id="PRO_0000178044" description="Apolipoprotein N-acyltransferase">
    <location>
        <begin position="1"/>
        <end position="547"/>
    </location>
</feature>
<feature type="transmembrane region" description="Helical" evidence="1">
    <location>
        <begin position="31"/>
        <end position="51"/>
    </location>
</feature>
<feature type="transmembrane region" description="Helical" evidence="1">
    <location>
        <begin position="71"/>
        <end position="91"/>
    </location>
</feature>
<feature type="transmembrane region" description="Helical" evidence="1">
    <location>
        <begin position="106"/>
        <end position="126"/>
    </location>
</feature>
<feature type="transmembrane region" description="Helical" evidence="1">
    <location>
        <begin position="180"/>
        <end position="200"/>
    </location>
</feature>
<feature type="transmembrane region" description="Helical" evidence="1">
    <location>
        <begin position="210"/>
        <end position="230"/>
    </location>
</feature>
<feature type="transmembrane region" description="Helical" evidence="1">
    <location>
        <begin position="515"/>
        <end position="535"/>
    </location>
</feature>
<feature type="domain" description="CN hydrolase" evidence="1">
    <location>
        <begin position="247"/>
        <end position="515"/>
    </location>
</feature>
<feature type="active site" description="Proton acceptor" evidence="1">
    <location>
        <position position="294"/>
    </location>
</feature>
<feature type="active site" evidence="1">
    <location>
        <position position="364"/>
    </location>
</feature>
<feature type="active site" description="Nucleophile" evidence="1">
    <location>
        <position position="418"/>
    </location>
</feature>
<comment type="function">
    <text evidence="1">Catalyzes the phospholipid dependent N-acylation of the N-terminal cysteine of apolipoprotein, the last step in lipoprotein maturation.</text>
</comment>
<comment type="catalytic activity">
    <reaction evidence="1">
        <text>N-terminal S-1,2-diacyl-sn-glyceryl-L-cysteinyl-[lipoprotein] + a glycerophospholipid = N-acyl-S-1,2-diacyl-sn-glyceryl-L-cysteinyl-[lipoprotein] + a 2-acyl-sn-glycero-3-phospholipid + H(+)</text>
        <dbReference type="Rhea" id="RHEA:48228"/>
        <dbReference type="Rhea" id="RHEA-COMP:14681"/>
        <dbReference type="Rhea" id="RHEA-COMP:14684"/>
        <dbReference type="ChEBI" id="CHEBI:15378"/>
        <dbReference type="ChEBI" id="CHEBI:136912"/>
        <dbReference type="ChEBI" id="CHEBI:140656"/>
        <dbReference type="ChEBI" id="CHEBI:140657"/>
        <dbReference type="ChEBI" id="CHEBI:140660"/>
        <dbReference type="EC" id="2.3.1.269"/>
    </reaction>
</comment>
<comment type="pathway">
    <text evidence="1">Protein modification; lipoprotein biosynthesis (N-acyl transfer).</text>
</comment>
<comment type="subcellular location">
    <subcellularLocation>
        <location evidence="1">Cell inner membrane</location>
        <topology evidence="1">Multi-pass membrane protein</topology>
    </subcellularLocation>
</comment>
<comment type="similarity">
    <text evidence="1">Belongs to the CN hydrolase family. Apolipoprotein N-acyltransferase subfamily.</text>
</comment>
<gene>
    <name evidence="1" type="primary">lnt</name>
    <name type="ordered locus">Bd1278</name>
</gene>
<protein>
    <recommendedName>
        <fullName evidence="1">Apolipoprotein N-acyltransferase</fullName>
        <shortName evidence="1">ALP N-acyltransferase</shortName>
        <ecNumber evidence="1">2.3.1.269</ecNumber>
    </recommendedName>
</protein>
<proteinExistence type="inferred from homology"/>
<name>LNT_BDEBA</name>
<dbReference type="EC" id="2.3.1.269" evidence="1"/>
<dbReference type="EMBL" id="BX842649">
    <property type="protein sequence ID" value="CAE79175.1"/>
    <property type="molecule type" value="Genomic_DNA"/>
</dbReference>
<dbReference type="SMR" id="P61032"/>
<dbReference type="STRING" id="264462.Bd1278"/>
<dbReference type="KEGG" id="bba:Bd1278"/>
<dbReference type="eggNOG" id="COG0815">
    <property type="taxonomic scope" value="Bacteria"/>
</dbReference>
<dbReference type="HOGENOM" id="CLU_019563_1_2_7"/>
<dbReference type="UniPathway" id="UPA00666"/>
<dbReference type="Proteomes" id="UP000008080">
    <property type="component" value="Chromosome"/>
</dbReference>
<dbReference type="GO" id="GO:0005886">
    <property type="term" value="C:plasma membrane"/>
    <property type="evidence" value="ECO:0007669"/>
    <property type="project" value="UniProtKB-SubCell"/>
</dbReference>
<dbReference type="GO" id="GO:0016410">
    <property type="term" value="F:N-acyltransferase activity"/>
    <property type="evidence" value="ECO:0007669"/>
    <property type="project" value="UniProtKB-UniRule"/>
</dbReference>
<dbReference type="GO" id="GO:0042158">
    <property type="term" value="P:lipoprotein biosynthetic process"/>
    <property type="evidence" value="ECO:0007669"/>
    <property type="project" value="UniProtKB-UniRule"/>
</dbReference>
<dbReference type="CDD" id="cd07571">
    <property type="entry name" value="ALP_N-acyl_transferase"/>
    <property type="match status" value="1"/>
</dbReference>
<dbReference type="Gene3D" id="3.60.110.10">
    <property type="entry name" value="Carbon-nitrogen hydrolase"/>
    <property type="match status" value="1"/>
</dbReference>
<dbReference type="HAMAP" id="MF_01148">
    <property type="entry name" value="Lnt"/>
    <property type="match status" value="1"/>
</dbReference>
<dbReference type="InterPro" id="IPR004563">
    <property type="entry name" value="Apolipo_AcylTrfase"/>
</dbReference>
<dbReference type="InterPro" id="IPR003010">
    <property type="entry name" value="C-N_Hydrolase"/>
</dbReference>
<dbReference type="InterPro" id="IPR036526">
    <property type="entry name" value="C-N_Hydrolase_sf"/>
</dbReference>
<dbReference type="InterPro" id="IPR045378">
    <property type="entry name" value="LNT_N"/>
</dbReference>
<dbReference type="NCBIfam" id="TIGR00546">
    <property type="entry name" value="lnt"/>
    <property type="match status" value="1"/>
</dbReference>
<dbReference type="PANTHER" id="PTHR38686">
    <property type="entry name" value="APOLIPOPROTEIN N-ACYLTRANSFERASE"/>
    <property type="match status" value="1"/>
</dbReference>
<dbReference type="PANTHER" id="PTHR38686:SF1">
    <property type="entry name" value="APOLIPOPROTEIN N-ACYLTRANSFERASE"/>
    <property type="match status" value="1"/>
</dbReference>
<dbReference type="Pfam" id="PF00795">
    <property type="entry name" value="CN_hydrolase"/>
    <property type="match status" value="1"/>
</dbReference>
<dbReference type="Pfam" id="PF20154">
    <property type="entry name" value="LNT_N"/>
    <property type="match status" value="1"/>
</dbReference>
<dbReference type="SUPFAM" id="SSF56317">
    <property type="entry name" value="Carbon-nitrogen hydrolase"/>
    <property type="match status" value="1"/>
</dbReference>
<dbReference type="PROSITE" id="PS50263">
    <property type="entry name" value="CN_HYDROLASE"/>
    <property type="match status" value="1"/>
</dbReference>
<organism>
    <name type="scientific">Bdellovibrio bacteriovorus (strain ATCC 15356 / DSM 50701 / NCIMB 9529 / HD100)</name>
    <dbReference type="NCBI Taxonomy" id="264462"/>
    <lineage>
        <taxon>Bacteria</taxon>
        <taxon>Pseudomonadati</taxon>
        <taxon>Bdellovibrionota</taxon>
        <taxon>Bdellovibrionia</taxon>
        <taxon>Bdellovibrionales</taxon>
        <taxon>Pseudobdellovibrionaceae</taxon>
        <taxon>Bdellovibrio</taxon>
    </lineage>
</organism>
<evidence type="ECO:0000255" key="1">
    <source>
        <dbReference type="HAMAP-Rule" id="MF_01148"/>
    </source>
</evidence>
<sequence>MDSLTLYVTNTMMKRWFQFFKHKAYDFRWAILSGILVGTSYIPFPPWALIFCYTPLWIYVTEESSSVKKSFWAGWVTQFILTLIGFHWIAYTAHEFGQLPWAVSYLALLLFCAFMHLYIPVAVAAGTWLRLRFKLSGGQTLFTIALLHALLERTWPVIFEWHLGYTLIWSKIPMYHLADLVGFHGLSAVVLLFNAWMGYVWLKQSFVKKALSHLSLLALTFAALVGWGFWHGKAWNKFDGETKATVVQANIGNLEKIYAEQGRAYQEVITRKFLDLSFAAMQKYPQTDILIWPETAFPDYLDQHLLDRKHAQILISGLQPLSRPLITGAYSKDPKADEKQDTSTYNALFLVDPLGNNLDKPYRKTELLAFGEYLPLSEQFPFLLKLLPFVSNFGRGHGPEVMKWDTPQGSVRWGGQICYEGLYPSFTRGLAEKGADILVNVTNDSWFGKTFEPQQHLYMTLARAIEVRRPLVRSTNTGVSTAVLANGDVLQKSPLHEEWSGQFVIKYLKNAPLTFFVQWGHWDWIVILLVLGAVIGRGALNARSRRS</sequence>
<reference key="1">
    <citation type="journal article" date="2004" name="Science">
        <title>A predator unmasked: life cycle of Bdellovibrio bacteriovorus from a genomic perspective.</title>
        <authorList>
            <person name="Rendulic S."/>
            <person name="Jagtap P."/>
            <person name="Rosinus A."/>
            <person name="Eppinger M."/>
            <person name="Baar C."/>
            <person name="Lanz C."/>
            <person name="Keller H."/>
            <person name="Lambert C."/>
            <person name="Evans K.J."/>
            <person name="Goesmann A."/>
            <person name="Meyer F."/>
            <person name="Sockett R.E."/>
            <person name="Schuster S.C."/>
        </authorList>
    </citation>
    <scope>NUCLEOTIDE SEQUENCE [LARGE SCALE GENOMIC DNA]</scope>
    <source>
        <strain>ATCC 15356 / DSM 50701 / NCIMB 9529 / HD100</strain>
    </source>
</reference>
<keyword id="KW-0012">Acyltransferase</keyword>
<keyword id="KW-0997">Cell inner membrane</keyword>
<keyword id="KW-1003">Cell membrane</keyword>
<keyword id="KW-0472">Membrane</keyword>
<keyword id="KW-1185">Reference proteome</keyword>
<keyword id="KW-0808">Transferase</keyword>
<keyword id="KW-0812">Transmembrane</keyword>
<keyword id="KW-1133">Transmembrane helix</keyword>
<accession>P61032</accession>